<dbReference type="EC" id="2.1.1.-" evidence="2"/>
<dbReference type="EMBL" id="BC129484">
    <property type="protein sequence ID" value="AAI29485.1"/>
    <property type="status" value="ALT_INIT"/>
    <property type="molecule type" value="mRNA"/>
</dbReference>
<dbReference type="SMR" id="A1L2E4"/>
<dbReference type="FunCoup" id="A1L2E4">
    <property type="interactions" value="6"/>
</dbReference>
<dbReference type="STRING" id="7955.ENSDARP00000091013"/>
<dbReference type="PaxDb" id="7955-ENSDARP00000091013"/>
<dbReference type="PeptideAtlas" id="A1L2E4"/>
<dbReference type="AGR" id="ZFIN:ZDB-GENE-030131-158"/>
<dbReference type="ZFIN" id="ZDB-GENE-030131-158">
    <property type="gene designation" value="mrm3b"/>
</dbReference>
<dbReference type="eggNOG" id="KOG2506">
    <property type="taxonomic scope" value="Eukaryota"/>
</dbReference>
<dbReference type="InParanoid" id="A1L2E4"/>
<dbReference type="PhylomeDB" id="A1L2E4"/>
<dbReference type="PRO" id="PR:A1L2E4"/>
<dbReference type="Proteomes" id="UP000000437">
    <property type="component" value="Unplaced"/>
</dbReference>
<dbReference type="GO" id="GO:0005739">
    <property type="term" value="C:mitochondrion"/>
    <property type="evidence" value="ECO:0007669"/>
    <property type="project" value="UniProtKB-SubCell"/>
</dbReference>
<dbReference type="GO" id="GO:0003723">
    <property type="term" value="F:RNA binding"/>
    <property type="evidence" value="ECO:0007669"/>
    <property type="project" value="InterPro"/>
</dbReference>
<dbReference type="GO" id="GO:0008650">
    <property type="term" value="F:rRNA (uridine-2'-O-)-methyltransferase activity"/>
    <property type="evidence" value="ECO:0007669"/>
    <property type="project" value="RHEA"/>
</dbReference>
<dbReference type="CDD" id="cd18106">
    <property type="entry name" value="SpoU-like_RNMTL1"/>
    <property type="match status" value="1"/>
</dbReference>
<dbReference type="Gene3D" id="3.30.1330.30">
    <property type="match status" value="1"/>
</dbReference>
<dbReference type="Gene3D" id="3.40.1280.10">
    <property type="match status" value="1"/>
</dbReference>
<dbReference type="InterPro" id="IPR029028">
    <property type="entry name" value="Alpha/beta_knot_MTases"/>
</dbReference>
<dbReference type="InterPro" id="IPR029064">
    <property type="entry name" value="Ribosomal_eL30-like_sf"/>
</dbReference>
<dbReference type="InterPro" id="IPR051259">
    <property type="entry name" value="rRNA_Methyltransferase"/>
</dbReference>
<dbReference type="InterPro" id="IPR001537">
    <property type="entry name" value="SpoU_MeTrfase"/>
</dbReference>
<dbReference type="InterPro" id="IPR013123">
    <property type="entry name" value="SpoU_subst-bd"/>
</dbReference>
<dbReference type="InterPro" id="IPR029026">
    <property type="entry name" value="tRNA_m1G_MTases_N"/>
</dbReference>
<dbReference type="PANTHER" id="PTHR43191">
    <property type="entry name" value="RRNA METHYLTRANSFERASE 3"/>
    <property type="match status" value="1"/>
</dbReference>
<dbReference type="PANTHER" id="PTHR43191:SF2">
    <property type="entry name" value="RRNA METHYLTRANSFERASE 3, MITOCHONDRIAL"/>
    <property type="match status" value="1"/>
</dbReference>
<dbReference type="Pfam" id="PF00588">
    <property type="entry name" value="SpoU_methylase"/>
    <property type="match status" value="2"/>
</dbReference>
<dbReference type="SMART" id="SM00967">
    <property type="entry name" value="SpoU_sub_bind"/>
    <property type="match status" value="1"/>
</dbReference>
<dbReference type="SUPFAM" id="SSF75217">
    <property type="entry name" value="alpha/beta knot"/>
    <property type="match status" value="1"/>
</dbReference>
<dbReference type="SUPFAM" id="SSF55315">
    <property type="entry name" value="L30e-like"/>
    <property type="match status" value="1"/>
</dbReference>
<feature type="transit peptide" description="Mitochondrion" evidence="3">
    <location>
        <begin position="1"/>
        <end position="37"/>
    </location>
</feature>
<feature type="chain" id="PRO_0000311304" description="rRNA methyltransferase 3B, mitochondrial">
    <location>
        <begin position="38"/>
        <end position="445"/>
    </location>
</feature>
<feature type="region of interest" description="Disordered" evidence="4">
    <location>
        <begin position="52"/>
        <end position="90"/>
    </location>
</feature>
<feature type="region of interest" description="Disordered" evidence="4">
    <location>
        <begin position="311"/>
        <end position="334"/>
    </location>
</feature>
<feature type="compositionally biased region" description="Polar residues" evidence="4">
    <location>
        <begin position="54"/>
        <end position="70"/>
    </location>
</feature>
<feature type="compositionally biased region" description="Polar residues" evidence="4">
    <location>
        <begin position="78"/>
        <end position="90"/>
    </location>
</feature>
<feature type="compositionally biased region" description="Polar residues" evidence="4">
    <location>
        <begin position="311"/>
        <end position="324"/>
    </location>
</feature>
<feature type="binding site" evidence="1">
    <location>
        <position position="387"/>
    </location>
    <ligand>
        <name>S-adenosyl-L-methionine</name>
        <dbReference type="ChEBI" id="CHEBI:59789"/>
    </ligand>
</feature>
<feature type="binding site" evidence="1">
    <location>
        <position position="411"/>
    </location>
    <ligand>
        <name>S-adenosyl-L-methionine</name>
        <dbReference type="ChEBI" id="CHEBI:59789"/>
    </ligand>
</feature>
<feature type="binding site" evidence="1">
    <location>
        <position position="420"/>
    </location>
    <ligand>
        <name>S-adenosyl-L-methionine</name>
        <dbReference type="ChEBI" id="CHEBI:59789"/>
    </ligand>
</feature>
<sequence>MATRIASMRFRCALFQSALTLGRNEVNIKRYVRRRRAVSGVVSVNEPTEISEGVISQTSERSSQHNNDITRNTDKSSIENPVSPNNSQPVQFSHINRQKVINLTSRTRFGEVDGLLYEKLHPGDKSLAKLARIAGSKKLREHQVVLEGKHLVCSALDAGAEAQTLYFSSVDALRELPLDKLRQTNVVKVKMEDAQVWSELDTSQEIIAIFKRPEASRLTFSEEKYGRAVPLTLICDTVRDPGNLGSVLRSAAAAGCHSVLLTKGCVDIWELKVLRAAMGAHFRLPIIPNLTWTDISNHLPKTSTVHVADNHSTTMGKHNDNTTPQKHRRPSDYGWVKGHQYQSKAHDDDDANDLCSLEDYCDENSKSLETQLYYTDWVAGHTSLIIGGETHGLSREALQLAERTSGRRLLIPMVDGVDSLNSAIAAGVLLFEGRKQLLSLEKIRV</sequence>
<organism>
    <name type="scientific">Danio rerio</name>
    <name type="common">Zebrafish</name>
    <name type="synonym">Brachydanio rerio</name>
    <dbReference type="NCBI Taxonomy" id="7955"/>
    <lineage>
        <taxon>Eukaryota</taxon>
        <taxon>Metazoa</taxon>
        <taxon>Chordata</taxon>
        <taxon>Craniata</taxon>
        <taxon>Vertebrata</taxon>
        <taxon>Euteleostomi</taxon>
        <taxon>Actinopterygii</taxon>
        <taxon>Neopterygii</taxon>
        <taxon>Teleostei</taxon>
        <taxon>Ostariophysi</taxon>
        <taxon>Cypriniformes</taxon>
        <taxon>Danionidae</taxon>
        <taxon>Danioninae</taxon>
        <taxon>Danio</taxon>
    </lineage>
</organism>
<proteinExistence type="evidence at transcript level"/>
<reference key="1">
    <citation type="submission" date="2006-12" db="EMBL/GenBank/DDBJ databases">
        <authorList>
            <consortium name="NIH - Zebrafish Gene Collection (ZGC) project"/>
        </authorList>
    </citation>
    <scope>NUCLEOTIDE SEQUENCE [LARGE SCALE MRNA]</scope>
    <source>
        <tissue>Testis</tissue>
    </source>
</reference>
<reference key="2">
    <citation type="journal article" date="2014" name="Mol. Biol. Cell">
        <title>MRM2 and MRM3 are involved in biogenesis of the large subunit of the mitochondrial ribosome.</title>
        <authorList>
            <person name="Rorbach J."/>
            <person name="Boesch P."/>
            <person name="Gammage P.A."/>
            <person name="Nicholls T.J."/>
            <person name="Pearce S.F."/>
            <person name="Patel D."/>
            <person name="Hauser A."/>
            <person name="Perocchi F."/>
            <person name="Minczuk M."/>
        </authorList>
    </citation>
    <scope>POSITION OF MODIFIED METHYLGUANOSINE IN MTLSU RRNA</scope>
</reference>
<name>MRM3B_DANRE</name>
<evidence type="ECO:0000250" key="1"/>
<evidence type="ECO:0000250" key="2">
    <source>
        <dbReference type="UniProtKB" id="Q9HC36"/>
    </source>
</evidence>
<evidence type="ECO:0000255" key="3"/>
<evidence type="ECO:0000256" key="4">
    <source>
        <dbReference type="SAM" id="MobiDB-lite"/>
    </source>
</evidence>
<evidence type="ECO:0000305" key="5"/>
<evidence type="ECO:0000305" key="6">
    <source>
    </source>
</evidence>
<gene>
    <name evidence="2" type="primary">rnmtl1b</name>
</gene>
<comment type="function">
    <text evidence="2 6">S-adenosyl-L-methionine-dependent 2'-O-ribose methyltransferase that catalyzes the formation of 2'-O-methylguanosine at position 1485 (Gm1485) in the mitochondrial large subunit ribosomal RNA (mtLSU rRNA), a conserved modification in the peptidyl transferase domain of the mtLSU rRNA. Also required for formation of 2'-O-methyluridine at position 1484 (Um1484) mediated by MRM2.</text>
</comment>
<comment type="catalytic activity">
    <reaction evidence="2">
        <text>a uridine in rRNA + S-adenosyl-L-methionine = a 2'-O-methyluridine in rRNA + S-adenosyl-L-homocysteine + H(+)</text>
        <dbReference type="Rhea" id="RHEA:54152"/>
        <dbReference type="Rhea" id="RHEA-COMP:13812"/>
        <dbReference type="Rhea" id="RHEA-COMP:13814"/>
        <dbReference type="ChEBI" id="CHEBI:15378"/>
        <dbReference type="ChEBI" id="CHEBI:57856"/>
        <dbReference type="ChEBI" id="CHEBI:59789"/>
        <dbReference type="ChEBI" id="CHEBI:65315"/>
        <dbReference type="ChEBI" id="CHEBI:74478"/>
    </reaction>
</comment>
<comment type="subcellular location">
    <subcellularLocation>
        <location evidence="2">Mitochondrion</location>
    </subcellularLocation>
</comment>
<comment type="similarity">
    <text evidence="5">Belongs to the class IV-like SAM-binding methyltransferase superfamily. RNA methyltransferase TrmH family.</text>
</comment>
<comment type="sequence caution" evidence="5">
    <conflict type="erroneous initiation">
        <sequence resource="EMBL-CDS" id="AAI29485"/>
    </conflict>
</comment>
<accession>A1L2E4</accession>
<protein>
    <recommendedName>
        <fullName evidence="2">rRNA methyltransferase 3B, mitochondrial</fullName>
        <ecNumber evidence="2">2.1.1.-</ecNumber>
    </recommendedName>
    <alternativeName>
        <fullName evidence="2">RNA methyltransferase-like protein 1B</fullName>
    </alternativeName>
    <alternativeName>
        <fullName evidence="2">rRNA (guanosine-2'-O)-methyltransferase</fullName>
    </alternativeName>
</protein>
<keyword id="KW-0489">Methyltransferase</keyword>
<keyword id="KW-0496">Mitochondrion</keyword>
<keyword id="KW-1185">Reference proteome</keyword>
<keyword id="KW-0698">rRNA processing</keyword>
<keyword id="KW-0949">S-adenosyl-L-methionine</keyword>
<keyword id="KW-0808">Transferase</keyword>
<keyword id="KW-0809">Transit peptide</keyword>